<evidence type="ECO:0000250" key="1"/>
<evidence type="ECO:0000255" key="2"/>
<evidence type="ECO:0000305" key="3"/>
<sequence length="113" mass="13521">MGEQNKLYYDVEKLVNSLQESFDLDCAQSVSLFTSKSRSNEAWLEELENKFKLKDDVELDDVENLRAEIDMKLNMLEDKVSYYERLYKELEEFQNEIKIKTVVNNRRQSRTPK</sequence>
<keyword id="KW-0175">Coiled coil</keyword>
<keyword id="KW-0967">Endosome</keyword>
<keyword id="KW-0813">Transport</keyword>
<feature type="chain" id="PRO_0000410623" description="Biogenesis of lysosome-related organelles complex 1 subunit BLI1">
    <location>
        <begin position="1"/>
        <end position="113"/>
    </location>
</feature>
<feature type="coiled-coil region" evidence="2">
    <location>
        <begin position="57"/>
        <end position="97"/>
    </location>
</feature>
<gene>
    <name type="primary">BLI1</name>
    <name type="ORF">QA23_2893</name>
</gene>
<reference key="1">
    <citation type="journal article" date="2011" name="PLoS Genet.">
        <title>Whole-genome comparison reveals novel genetic elements that characterize the genome of industrial strains of Saccharomyces cerevisiae.</title>
        <authorList>
            <person name="Borneman A.R."/>
            <person name="Desany B.A."/>
            <person name="Riches D."/>
            <person name="Affourtit J.P."/>
            <person name="Forgan A.H."/>
            <person name="Pretorius I.S."/>
            <person name="Egholm M."/>
            <person name="Chambers P.J."/>
        </authorList>
    </citation>
    <scope>NUCLEOTIDE SEQUENCE [LARGE SCALE GENOMIC DNA]</scope>
    <source>
        <strain>Lalvin QA23</strain>
    </source>
</reference>
<dbReference type="EMBL" id="ADVV01000056">
    <property type="protein sequence ID" value="EGA82046.1"/>
    <property type="molecule type" value="Genomic_DNA"/>
</dbReference>
<dbReference type="HOGENOM" id="CLU_168467_0_0_1"/>
<dbReference type="GO" id="GO:0005768">
    <property type="term" value="C:endosome"/>
    <property type="evidence" value="ECO:0007669"/>
    <property type="project" value="UniProtKB-SubCell"/>
</dbReference>
<dbReference type="InterPro" id="IPR020491">
    <property type="entry name" value="BLI1"/>
</dbReference>
<dbReference type="Pfam" id="PF17324">
    <property type="entry name" value="BLI1"/>
    <property type="match status" value="1"/>
</dbReference>
<protein>
    <recommendedName>
        <fullName>Biogenesis of lysosome-related organelles complex 1 subunit BLI1</fullName>
        <shortName>BLOC-1 subunit BLI1</shortName>
    </recommendedName>
    <alternativeName>
        <fullName>BLOC-1 interactor 1</fullName>
    </alternativeName>
</protein>
<organism>
    <name type="scientific">Saccharomyces cerevisiae (strain Lalvin QA23)</name>
    <name type="common">Baker's yeast</name>
    <dbReference type="NCBI Taxonomy" id="764098"/>
    <lineage>
        <taxon>Eukaryota</taxon>
        <taxon>Fungi</taxon>
        <taxon>Dikarya</taxon>
        <taxon>Ascomycota</taxon>
        <taxon>Saccharomycotina</taxon>
        <taxon>Saccharomycetes</taxon>
        <taxon>Saccharomycetales</taxon>
        <taxon>Saccharomycetaceae</taxon>
        <taxon>Saccharomyces</taxon>
    </lineage>
</organism>
<proteinExistence type="inferred from homology"/>
<accession>E7KR23</accession>
<comment type="function">
    <text evidence="1">Component of the biogenesis of lysosome-related organelles complex-1 (BLOC-1) involved in endosomal cargo sorting.</text>
</comment>
<comment type="subunit">
    <text evidence="1">Component of the biogenesis of lysosome-related organelles complex-1 (BLOC-1) composed of at least BLI1, BLS1, CNL1, KXD1, SNN1 and VAB2.</text>
</comment>
<comment type="subcellular location">
    <subcellularLocation>
        <location evidence="1">Endosome</location>
    </subcellularLocation>
</comment>
<comment type="similarity">
    <text evidence="3">Belongs to the BLI1 family.</text>
</comment>
<name>BLI1_YEASL</name>